<organism>
    <name type="scientific">Shigella boydii serotype 18 (strain CDC 3083-94 / BS512)</name>
    <dbReference type="NCBI Taxonomy" id="344609"/>
    <lineage>
        <taxon>Bacteria</taxon>
        <taxon>Pseudomonadati</taxon>
        <taxon>Pseudomonadota</taxon>
        <taxon>Gammaproteobacteria</taxon>
        <taxon>Enterobacterales</taxon>
        <taxon>Enterobacteriaceae</taxon>
        <taxon>Shigella</taxon>
    </lineage>
</organism>
<sequence>MSEKTFLVEIGTEELPPKALRSLAESFAANFTVELDNAGLAHGTVQWFAAPRRLTLKVANLAEAQPDREIEKRGPAIAQAFDAEGKPSKAAEGWARGCGITVDQAERLTTDKGEWLLYRAHVKGESTEALLPNMVATSLAKLPIPKLMRWGASDVHFVRPVHTVTLLLGDKVIPATILGIQSDRVIRGHRFMGEPEFTIDNADQYPEILRERGKVIADYEERKAKIKADAEEAARKIGGNADLSESLLEEVASLVEWPVVLTAKFEEKFLAVPAEALVYTMKGDQKYFPVYANDGKLLPNFIFVANIESKDPQQIISGNEKVVRPRLADAEFFFNTDRKKRLEDNLPRLQTVLFQQQLGTLRDKTDRIQALAGWIAEQIGADVNHATRAGLLSKCDLMTNMVFEFTDTQGVMGMHYARHDGEAEDVAVALNEQYQPRFAGDDLPSNPVACALAIADKMDTLAGIFGIGQHPKGDKDPFALRRAALGVLRIIVEKNLNLDLQTLTEEAVRLYGDKLTNANVVDDVIDFMLGRFRAWYQDEGYTVDTIQAVLARRPTRPADFDARMKAVSHFRTLDAAAALAAANKRVSNILAKSDEVLSDRVNASTLKEPEEIKLAMQVVVLRDKLEPYFAEGRYQDALVELAELREPVDAFFDKVMVMVDDKELRLNRLTMLEKLRELFLRVADISLLQ</sequence>
<feature type="chain" id="PRO_1000101340" description="Glycine--tRNA ligase beta subunit">
    <location>
        <begin position="1"/>
        <end position="689"/>
    </location>
</feature>
<reference key="1">
    <citation type="submission" date="2008-05" db="EMBL/GenBank/DDBJ databases">
        <title>Complete sequence of Shigella boydii serotype 18 strain BS512.</title>
        <authorList>
            <person name="Rasko D.A."/>
            <person name="Rosovitz M."/>
            <person name="Maurelli A.T."/>
            <person name="Myers G."/>
            <person name="Seshadri R."/>
            <person name="Cer R."/>
            <person name="Jiang L."/>
            <person name="Ravel J."/>
            <person name="Sebastian Y."/>
        </authorList>
    </citation>
    <scope>NUCLEOTIDE SEQUENCE [LARGE SCALE GENOMIC DNA]</scope>
    <source>
        <strain>CDC 3083-94 / BS512</strain>
    </source>
</reference>
<accession>B2U566</accession>
<protein>
    <recommendedName>
        <fullName evidence="1">Glycine--tRNA ligase beta subunit</fullName>
        <ecNumber evidence="1">6.1.1.14</ecNumber>
    </recommendedName>
    <alternativeName>
        <fullName evidence="1">Glycyl-tRNA synthetase beta subunit</fullName>
        <shortName evidence="1">GlyRS</shortName>
    </alternativeName>
</protein>
<gene>
    <name evidence="1" type="primary">glyS</name>
    <name type="ordered locus">SbBS512_E3966</name>
</gene>
<evidence type="ECO:0000255" key="1">
    <source>
        <dbReference type="HAMAP-Rule" id="MF_00255"/>
    </source>
</evidence>
<dbReference type="EC" id="6.1.1.14" evidence="1"/>
<dbReference type="EMBL" id="CP001063">
    <property type="protein sequence ID" value="ACD08243.1"/>
    <property type="molecule type" value="Genomic_DNA"/>
</dbReference>
<dbReference type="RefSeq" id="WP_001291812.1">
    <property type="nucleotide sequence ID" value="NC_010658.1"/>
</dbReference>
<dbReference type="SMR" id="B2U566"/>
<dbReference type="STRING" id="344609.SbBS512_E3966"/>
<dbReference type="KEGG" id="sbc:SbBS512_E3966"/>
<dbReference type="HOGENOM" id="CLU_007220_2_2_6"/>
<dbReference type="Proteomes" id="UP000001030">
    <property type="component" value="Chromosome"/>
</dbReference>
<dbReference type="GO" id="GO:0005829">
    <property type="term" value="C:cytosol"/>
    <property type="evidence" value="ECO:0007669"/>
    <property type="project" value="TreeGrafter"/>
</dbReference>
<dbReference type="GO" id="GO:0004814">
    <property type="term" value="F:arginine-tRNA ligase activity"/>
    <property type="evidence" value="ECO:0007669"/>
    <property type="project" value="InterPro"/>
</dbReference>
<dbReference type="GO" id="GO:0005524">
    <property type="term" value="F:ATP binding"/>
    <property type="evidence" value="ECO:0007669"/>
    <property type="project" value="UniProtKB-UniRule"/>
</dbReference>
<dbReference type="GO" id="GO:0004820">
    <property type="term" value="F:glycine-tRNA ligase activity"/>
    <property type="evidence" value="ECO:0007669"/>
    <property type="project" value="UniProtKB-UniRule"/>
</dbReference>
<dbReference type="GO" id="GO:0006420">
    <property type="term" value="P:arginyl-tRNA aminoacylation"/>
    <property type="evidence" value="ECO:0007669"/>
    <property type="project" value="InterPro"/>
</dbReference>
<dbReference type="GO" id="GO:0006426">
    <property type="term" value="P:glycyl-tRNA aminoacylation"/>
    <property type="evidence" value="ECO:0007669"/>
    <property type="project" value="UniProtKB-UniRule"/>
</dbReference>
<dbReference type="HAMAP" id="MF_00255">
    <property type="entry name" value="Gly_tRNA_synth_beta"/>
    <property type="match status" value="1"/>
</dbReference>
<dbReference type="InterPro" id="IPR008909">
    <property type="entry name" value="DALR_anticod-bd"/>
</dbReference>
<dbReference type="InterPro" id="IPR015944">
    <property type="entry name" value="Gly-tRNA-synth_bsu"/>
</dbReference>
<dbReference type="InterPro" id="IPR006194">
    <property type="entry name" value="Gly-tRNA-synth_heterodimer"/>
</dbReference>
<dbReference type="NCBIfam" id="TIGR00211">
    <property type="entry name" value="glyS"/>
    <property type="match status" value="1"/>
</dbReference>
<dbReference type="PANTHER" id="PTHR30075:SF2">
    <property type="entry name" value="GLYCINE--TRNA LIGASE, CHLOROPLASTIC_MITOCHONDRIAL 2"/>
    <property type="match status" value="1"/>
</dbReference>
<dbReference type="PANTHER" id="PTHR30075">
    <property type="entry name" value="GLYCYL-TRNA SYNTHETASE"/>
    <property type="match status" value="1"/>
</dbReference>
<dbReference type="Pfam" id="PF05746">
    <property type="entry name" value="DALR_1"/>
    <property type="match status" value="1"/>
</dbReference>
<dbReference type="Pfam" id="PF02092">
    <property type="entry name" value="tRNA_synt_2f"/>
    <property type="match status" value="1"/>
</dbReference>
<dbReference type="PRINTS" id="PR01045">
    <property type="entry name" value="TRNASYNTHGB"/>
</dbReference>
<dbReference type="SUPFAM" id="SSF109604">
    <property type="entry name" value="HD-domain/PDEase-like"/>
    <property type="match status" value="1"/>
</dbReference>
<dbReference type="PROSITE" id="PS50861">
    <property type="entry name" value="AA_TRNA_LIGASE_II_GLYAB"/>
    <property type="match status" value="1"/>
</dbReference>
<proteinExistence type="inferred from homology"/>
<keyword id="KW-0030">Aminoacyl-tRNA synthetase</keyword>
<keyword id="KW-0067">ATP-binding</keyword>
<keyword id="KW-0963">Cytoplasm</keyword>
<keyword id="KW-0436">Ligase</keyword>
<keyword id="KW-0547">Nucleotide-binding</keyword>
<keyword id="KW-0648">Protein biosynthesis</keyword>
<keyword id="KW-1185">Reference proteome</keyword>
<name>SYGB_SHIB3</name>
<comment type="catalytic activity">
    <reaction evidence="1">
        <text>tRNA(Gly) + glycine + ATP = glycyl-tRNA(Gly) + AMP + diphosphate</text>
        <dbReference type="Rhea" id="RHEA:16013"/>
        <dbReference type="Rhea" id="RHEA-COMP:9664"/>
        <dbReference type="Rhea" id="RHEA-COMP:9683"/>
        <dbReference type="ChEBI" id="CHEBI:30616"/>
        <dbReference type="ChEBI" id="CHEBI:33019"/>
        <dbReference type="ChEBI" id="CHEBI:57305"/>
        <dbReference type="ChEBI" id="CHEBI:78442"/>
        <dbReference type="ChEBI" id="CHEBI:78522"/>
        <dbReference type="ChEBI" id="CHEBI:456215"/>
        <dbReference type="EC" id="6.1.1.14"/>
    </reaction>
</comment>
<comment type="subunit">
    <text evidence="1">Tetramer of two alpha and two beta subunits.</text>
</comment>
<comment type="subcellular location">
    <subcellularLocation>
        <location evidence="1">Cytoplasm</location>
    </subcellularLocation>
</comment>
<comment type="similarity">
    <text evidence="1">Belongs to the class-II aminoacyl-tRNA synthetase family.</text>
</comment>